<evidence type="ECO:0000250" key="1">
    <source>
        <dbReference type="UniProtKB" id="P08956"/>
    </source>
</evidence>
<evidence type="ECO:0000255" key="2">
    <source>
        <dbReference type="PROSITE-ProRule" id="PRU00541"/>
    </source>
</evidence>
<evidence type="ECO:0000303" key="3">
    <source>
    </source>
</evidence>
<evidence type="ECO:0000303" key="4">
    <source>
    </source>
</evidence>
<evidence type="ECO:0000305" key="5"/>
<feature type="chain" id="PRO_0000077270" description="Type I restriction enzyme SauMW2ORF169P endonuclease subunit">
    <location>
        <begin position="1"/>
        <end position="929"/>
    </location>
</feature>
<feature type="domain" description="Helicase ATP-binding" evidence="2">
    <location>
        <begin position="254"/>
        <end position="418"/>
    </location>
</feature>
<feature type="binding site" evidence="2">
    <location>
        <begin position="268"/>
        <end position="274"/>
    </location>
    <ligand>
        <name>ATP</name>
        <dbReference type="ChEBI" id="CHEBI:30616"/>
    </ligand>
</feature>
<gene>
    <name evidence="3" type="primary">hsdR</name>
    <name type="ordered locus">MW0169</name>
</gene>
<proteinExistence type="inferred from homology"/>
<dbReference type="EC" id="3.1.21.3" evidence="1"/>
<dbReference type="EMBL" id="BA000033">
    <property type="protein sequence ID" value="BAB94034.1"/>
    <property type="molecule type" value="Genomic_DNA"/>
</dbReference>
<dbReference type="RefSeq" id="WP_000331353.1">
    <property type="nucleotide sequence ID" value="NC_003923.1"/>
</dbReference>
<dbReference type="SMR" id="Q8NYL9"/>
<dbReference type="REBASE" id="6253">
    <property type="entry name" value="SauMW2ORF169P"/>
</dbReference>
<dbReference type="KEGG" id="sam:MW0169"/>
<dbReference type="HOGENOM" id="CLU_004848_1_0_9"/>
<dbReference type="PRO" id="PR:Q8NYL9"/>
<dbReference type="GO" id="GO:0005524">
    <property type="term" value="F:ATP binding"/>
    <property type="evidence" value="ECO:0007669"/>
    <property type="project" value="UniProtKB-KW"/>
</dbReference>
<dbReference type="GO" id="GO:0003677">
    <property type="term" value="F:DNA binding"/>
    <property type="evidence" value="ECO:0007669"/>
    <property type="project" value="UniProtKB-KW"/>
</dbReference>
<dbReference type="GO" id="GO:0009035">
    <property type="term" value="F:type I site-specific deoxyribonuclease activity"/>
    <property type="evidence" value="ECO:0007669"/>
    <property type="project" value="UniProtKB-EC"/>
</dbReference>
<dbReference type="GO" id="GO:0009307">
    <property type="term" value="P:DNA restriction-modification system"/>
    <property type="evidence" value="ECO:0007669"/>
    <property type="project" value="UniProtKB-KW"/>
</dbReference>
<dbReference type="CDD" id="cd18030">
    <property type="entry name" value="DEXHc_RE_I_HsdR"/>
    <property type="match status" value="1"/>
</dbReference>
<dbReference type="CDD" id="cd22332">
    <property type="entry name" value="HsdR_N"/>
    <property type="match status" value="1"/>
</dbReference>
<dbReference type="CDD" id="cd18800">
    <property type="entry name" value="SF2_C_EcoR124I-like"/>
    <property type="match status" value="1"/>
</dbReference>
<dbReference type="Gene3D" id="1.20.58.2040">
    <property type="match status" value="1"/>
</dbReference>
<dbReference type="Gene3D" id="3.90.1570.50">
    <property type="match status" value="1"/>
</dbReference>
<dbReference type="Gene3D" id="3.40.50.300">
    <property type="entry name" value="P-loop containing nucleotide triphosphate hydrolases"/>
    <property type="match status" value="2"/>
</dbReference>
<dbReference type="InterPro" id="IPR014001">
    <property type="entry name" value="Helicase_ATP-bd"/>
</dbReference>
<dbReference type="InterPro" id="IPR055180">
    <property type="entry name" value="HsdR_RecA-like_helicase_dom_2"/>
</dbReference>
<dbReference type="InterPro" id="IPR027417">
    <property type="entry name" value="P-loop_NTPase"/>
</dbReference>
<dbReference type="InterPro" id="IPR007409">
    <property type="entry name" value="Restrct_endonuc_type1_HsdR_N"/>
</dbReference>
<dbReference type="InterPro" id="IPR004473">
    <property type="entry name" value="Restrct_endonuc_typeI_HsdR"/>
</dbReference>
<dbReference type="InterPro" id="IPR040980">
    <property type="entry name" value="SWI2_SNF2"/>
</dbReference>
<dbReference type="InterPro" id="IPR051268">
    <property type="entry name" value="Type-I_R_enzyme_R_subunit"/>
</dbReference>
<dbReference type="InterPro" id="IPR022625">
    <property type="entry name" value="TypeI_RM_Rsu_C"/>
</dbReference>
<dbReference type="NCBIfam" id="TIGR00348">
    <property type="entry name" value="hsdR"/>
    <property type="match status" value="1"/>
</dbReference>
<dbReference type="PANTHER" id="PTHR30195:SF16">
    <property type="entry name" value="TYPE I RESTRICTION ENZYME ENDONUCLEASE SUBUNIT"/>
    <property type="match status" value="1"/>
</dbReference>
<dbReference type="PANTHER" id="PTHR30195">
    <property type="entry name" value="TYPE I SITE-SPECIFIC DEOXYRIBONUCLEASE PROTEIN SUBUNIT M AND R"/>
    <property type="match status" value="1"/>
</dbReference>
<dbReference type="Pfam" id="PF12008">
    <property type="entry name" value="EcoR124_C"/>
    <property type="match status" value="1"/>
</dbReference>
<dbReference type="Pfam" id="PF04313">
    <property type="entry name" value="HSDR_N"/>
    <property type="match status" value="1"/>
</dbReference>
<dbReference type="Pfam" id="PF18766">
    <property type="entry name" value="SWI2_SNF2"/>
    <property type="match status" value="1"/>
</dbReference>
<dbReference type="Pfam" id="PF22679">
    <property type="entry name" value="T1R_D3-like"/>
    <property type="match status" value="1"/>
</dbReference>
<dbReference type="SMART" id="SM00487">
    <property type="entry name" value="DEXDc"/>
    <property type="match status" value="1"/>
</dbReference>
<dbReference type="SUPFAM" id="SSF52540">
    <property type="entry name" value="P-loop containing nucleoside triphosphate hydrolases"/>
    <property type="match status" value="1"/>
</dbReference>
<dbReference type="PROSITE" id="PS51192">
    <property type="entry name" value="HELICASE_ATP_BIND_1"/>
    <property type="match status" value="1"/>
</dbReference>
<organism>
    <name type="scientific">Staphylococcus aureus (strain MW2)</name>
    <dbReference type="NCBI Taxonomy" id="196620"/>
    <lineage>
        <taxon>Bacteria</taxon>
        <taxon>Bacillati</taxon>
        <taxon>Bacillota</taxon>
        <taxon>Bacilli</taxon>
        <taxon>Bacillales</taxon>
        <taxon>Staphylococcaceae</taxon>
        <taxon>Staphylococcus</taxon>
    </lineage>
</organism>
<comment type="function">
    <text evidence="1 4">The restriction (R) subunit of a type I restriction enzyme that recognizes an undetermined sequence and cleaves a random distance away. Subunit R is required for both nuclease and ATPase activities, but not for modification. After locating a non-methylated recognition site, the enzyme complex serves as a molecular motor that translocates DNA in an ATP-dependent manner until a collision occurs that triggers cleavage.</text>
</comment>
<comment type="catalytic activity">
    <reaction evidence="1">
        <text>Endonucleolytic cleavage of DNA to give random double-stranded fragments with terminal 5'-phosphates, ATP is simultaneously hydrolyzed.</text>
        <dbReference type="EC" id="3.1.21.3"/>
    </reaction>
</comment>
<comment type="subunit">
    <text evidence="1">The type I restriction/modification system is composed of three polypeptides R, M and S.</text>
</comment>
<comment type="miscellaneous">
    <text evidence="1">Type I restriction and modification enzymes are complex, multifunctional systems which require ATP, S-adenosyl methionine and magnesium as cofactors and, in addition to their endonucleolytic and methylase activities, are potent DNA-dependent ATPases.</text>
</comment>
<comment type="similarity">
    <text evidence="5">Belongs to the HsdR family.</text>
</comment>
<reference key="1">
    <citation type="journal article" date="2002" name="Lancet">
        <title>Genome and virulence determinants of high virulence community-acquired MRSA.</title>
        <authorList>
            <person name="Baba T."/>
            <person name="Takeuchi F."/>
            <person name="Kuroda M."/>
            <person name="Yuzawa H."/>
            <person name="Aoki K."/>
            <person name="Oguchi A."/>
            <person name="Nagai Y."/>
            <person name="Iwama N."/>
            <person name="Asano K."/>
            <person name="Naimi T."/>
            <person name="Kuroda H."/>
            <person name="Cui L."/>
            <person name="Yamamoto K."/>
            <person name="Hiramatsu K."/>
        </authorList>
    </citation>
    <scope>NUCLEOTIDE SEQUENCE [LARGE SCALE GENOMIC DNA]</scope>
    <source>
        <strain>MW2</strain>
    </source>
</reference>
<reference key="2">
    <citation type="journal article" date="2003" name="Nucleic Acids Res.">
        <title>A nomenclature for restriction enzymes, DNA methyltransferases, homing endonucleases and their genes.</title>
        <authorList>
            <person name="Roberts R.J."/>
            <person name="Belfort M."/>
            <person name="Bestor T."/>
            <person name="Bhagwat A.S."/>
            <person name="Bickle T.A."/>
            <person name="Bitinaite J."/>
            <person name="Blumenthal R.M."/>
            <person name="Degtyarev S.K."/>
            <person name="Dryden D.T."/>
            <person name="Dybvig K."/>
            <person name="Firman K."/>
            <person name="Gromova E.S."/>
            <person name="Gumport R.I."/>
            <person name="Halford S.E."/>
            <person name="Hattman S."/>
            <person name="Heitman J."/>
            <person name="Hornby D.P."/>
            <person name="Janulaitis A."/>
            <person name="Jeltsch A."/>
            <person name="Josephsen J."/>
            <person name="Kiss A."/>
            <person name="Klaenhammer T.R."/>
            <person name="Kobayashi I."/>
            <person name="Kong H."/>
            <person name="Krueger D.H."/>
            <person name="Lacks S."/>
            <person name="Marinus M.G."/>
            <person name="Miyahara M."/>
            <person name="Morgan R.D."/>
            <person name="Murray N.E."/>
            <person name="Nagaraja V."/>
            <person name="Piekarowicz A."/>
            <person name="Pingoud A."/>
            <person name="Raleigh E."/>
            <person name="Rao D.N."/>
            <person name="Reich N."/>
            <person name="Repin V.E."/>
            <person name="Selker E.U."/>
            <person name="Shaw P.C."/>
            <person name="Stein D.C."/>
            <person name="Stoddard B.L."/>
            <person name="Szybalski W."/>
            <person name="Trautner T.A."/>
            <person name="Van Etten J.L."/>
            <person name="Vitor J.M."/>
            <person name="Wilson G.G."/>
            <person name="Xu S.Y."/>
        </authorList>
    </citation>
    <scope>NOMENCLATURE</scope>
</reference>
<protein>
    <recommendedName>
        <fullName evidence="4">Type I restriction enzyme SauMW2ORF169P endonuclease subunit</fullName>
        <shortName>R protein</shortName>
        <shortName evidence="4">SauMW2ORF169P</shortName>
        <ecNumber evidence="1">3.1.21.3</ecNumber>
    </recommendedName>
    <alternativeName>
        <fullName>Type-1 restriction enzyme R protein</fullName>
    </alternativeName>
</protein>
<name>HSDR_STAAW</name>
<keyword id="KW-0067">ATP-binding</keyword>
<keyword id="KW-0238">DNA-binding</keyword>
<keyword id="KW-0255">Endonuclease</keyword>
<keyword id="KW-0378">Hydrolase</keyword>
<keyword id="KW-0540">Nuclease</keyword>
<keyword id="KW-0547">Nucleotide-binding</keyword>
<keyword id="KW-0680">Restriction system</keyword>
<accession>Q8NYL9</accession>
<sequence length="929" mass="109253">MAYQSEYALENEMMNQLEQLGYERVTIRDNKQLLDNFRTILNERHADKLEGNPLTDKEFQRLLTMIDGKSIFESARILRDKLPLRRDDESEVYLSFLDTKSWCKNKFQVTNQVSVEDTYKARYDVTILINGLPLVQVELKRRGIDINEAFNQVKRYRKQNYTGLFRYIQMFIISNGVETRYFSNNDSELLKSHMFYWSDKQNNRINTLQSFAESFMRPCQLAKMISRYMIINETDRILMAMRPYQVYAVEALIQQATETGNNGYVWHTTGSGKTLTSFKASQILSQQDDIKKVIFLVDRKDLDSQTEEEFNKFAKGAVDKTFNTSQLVRQLNDKSLPLIVTTIQKMAKAIQGNAHLLEQYKTNKVVFIIDECHRSQFGDMHRLVKQHFKNAQYFGFTGTPRFPENSSQDGRTTADIFGRCLHTYLIRDAIHDGNVLGFSVDYINTFKNKALKAEDNSMVEAIDTEEVWLADKRVELVTRHIINNHDKYTRNRQYSSIFTVQSIHALIKYYETFKRLNKKLEQPLTIAGIFTFKPNEDDRDGEVPYHSREKLEIMISDYNKKFETNFSTDTTNEYFNHISKNVKKGVKDSKIDILIVVNMFLTGFDSKVLNTLYVDKNLMYHDLIQAYSRTNRVEKESKPFGKIVNYRDLKKETDDALRVFSQTNDTDTILMRSYEEYKKEFMDAYRELKMIVPTPHMVDDIQDEEELKRFVEAYRLLAKIILRLKAFDEFEFTIDEIGMDEQENEDYKSKYLAVYDQVKRATAEKNKVSILNDIDFEIEMMRNDTINVNYIMNILRQIDLEDKAEQRRNQEQIRRILDHADDPTLRLKRDLIREFIDNVVPSLNKDDDIDQEYVNFESIKKEAEFKGFAGERSIDEQALKTISNDYQYSGVVNPHHLKKMIGDLPLKEKRKARKAIESFVAETTEKYGV</sequence>